<sequence>MDIATGPESLERCFPRGQTDCAKMLDGIKMEEHALRPGPATLGVLLGSDCPHPAVCEGCQRPISDRFLMRVNESSWHEECLQCAACQQALTTSCYFRDRKLYCKQDYQQLFAAKCSGCMEKIAPTEFVMRALECVYHLGCFCCCVCERQLRKGDEFVLKEGQLLCKGDYEKEKDLLSSVSPDESDSVKSEDEDGDMKPAKGQGSQSKGSGDDGKDPRRPKRPRTILTTQQRRAFKASFEVSSKPCRKVRETLAAETGLSVRVVQVWFQNQRAKMKKLARRHQQQQEQQNSQRLGQEVLSSRMEGMMASYTPLAPPQQQIVAMEQSPYGSSDPFQQGLTPPQMPGDHMNPYGNDSIFHDIDSDTSLTSLSDCFLGSSDVGSLQARVGNPIDRLYSMQSSYFAS</sequence>
<keyword id="KW-0010">Activator</keyword>
<keyword id="KW-0025">Alternative splicing</keyword>
<keyword id="KW-0217">Developmental protein</keyword>
<keyword id="KW-0225">Disease variant</keyword>
<keyword id="KW-0238">DNA-binding</keyword>
<keyword id="KW-0371">Homeobox</keyword>
<keyword id="KW-0440">LIM domain</keyword>
<keyword id="KW-0479">Metal-binding</keyword>
<keyword id="KW-0539">Nucleus</keyword>
<keyword id="KW-1267">Proteomics identification</keyword>
<keyword id="KW-1185">Reference proteome</keyword>
<keyword id="KW-0677">Repeat</keyword>
<keyword id="KW-0804">Transcription</keyword>
<keyword id="KW-0805">Transcription regulation</keyword>
<keyword id="KW-0862">Zinc</keyword>
<organism>
    <name type="scientific">Homo sapiens</name>
    <name type="common">Human</name>
    <dbReference type="NCBI Taxonomy" id="9606"/>
    <lineage>
        <taxon>Eukaryota</taxon>
        <taxon>Metazoa</taxon>
        <taxon>Chordata</taxon>
        <taxon>Craniata</taxon>
        <taxon>Vertebrata</taxon>
        <taxon>Euteleostomi</taxon>
        <taxon>Mammalia</taxon>
        <taxon>Eutheria</taxon>
        <taxon>Euarchontoglires</taxon>
        <taxon>Primates</taxon>
        <taxon>Haplorrhini</taxon>
        <taxon>Catarrhini</taxon>
        <taxon>Hominidae</taxon>
        <taxon>Homo</taxon>
    </lineage>
</organism>
<evidence type="ECO:0000255" key="1">
    <source>
        <dbReference type="PROSITE-ProRule" id="PRU00108"/>
    </source>
</evidence>
<evidence type="ECO:0000255" key="2">
    <source>
        <dbReference type="PROSITE-ProRule" id="PRU00125"/>
    </source>
</evidence>
<evidence type="ECO:0000256" key="3">
    <source>
        <dbReference type="SAM" id="MobiDB-lite"/>
    </source>
</evidence>
<evidence type="ECO:0000269" key="4">
    <source>
    </source>
</evidence>
<evidence type="ECO:0000269" key="5">
    <source>
    </source>
</evidence>
<evidence type="ECO:0000269" key="6">
    <source>
    </source>
</evidence>
<evidence type="ECO:0000269" key="7">
    <source>
    </source>
</evidence>
<evidence type="ECO:0000269" key="8">
    <source>
    </source>
</evidence>
<evidence type="ECO:0000269" key="9">
    <source>
    </source>
</evidence>
<evidence type="ECO:0000269" key="10">
    <source>
    </source>
</evidence>
<evidence type="ECO:0000269" key="11">
    <source>
    </source>
</evidence>
<evidence type="ECO:0000269" key="12">
    <source>
    </source>
</evidence>
<evidence type="ECO:0000269" key="13">
    <source>
    </source>
</evidence>
<evidence type="ECO:0000269" key="14">
    <source>
    </source>
</evidence>
<evidence type="ECO:0000269" key="15">
    <source>
    </source>
</evidence>
<evidence type="ECO:0000303" key="16">
    <source>
    </source>
</evidence>
<evidence type="ECO:0000303" key="17">
    <source>
    </source>
</evidence>
<evidence type="ECO:0000305" key="18"/>
<feature type="chain" id="PRO_0000075828" description="LIM homeobox transcription factor 1-beta">
    <location>
        <begin position="1"/>
        <end position="402"/>
    </location>
</feature>
<feature type="domain" description="LIM zinc-binding 1" evidence="2">
    <location>
        <begin position="56"/>
        <end position="106"/>
    </location>
</feature>
<feature type="domain" description="LIM zinc-binding 2" evidence="2">
    <location>
        <begin position="115"/>
        <end position="168"/>
    </location>
</feature>
<feature type="DNA-binding region" description="Homeobox" evidence="1">
    <location>
        <begin position="219"/>
        <end position="278"/>
    </location>
</feature>
<feature type="region of interest" description="Disordered" evidence="3">
    <location>
        <begin position="176"/>
        <end position="229"/>
    </location>
</feature>
<feature type="region of interest" description="Disordered" evidence="3">
    <location>
        <begin position="326"/>
        <end position="346"/>
    </location>
</feature>
<feature type="compositionally biased region" description="Polar residues" evidence="3">
    <location>
        <begin position="326"/>
        <end position="338"/>
    </location>
</feature>
<feature type="splice variant" id="VSP_046472" description="In isoform 3." evidence="18">
    <original>L</original>
    <variation>LGQGEPGPGQGL</variation>
    <location>
        <position position="293"/>
    </location>
</feature>
<feature type="splice variant" id="VSP_003113" description="In isoform 2 and isoform 3." evidence="16 17">
    <location>
        <begin position="345"/>
        <end position="351"/>
    </location>
</feature>
<feature type="sequence variant" id="VAR_015201" description="In NPS." evidence="4">
    <original>C</original>
    <variation>R</variation>
    <location>
        <position position="59"/>
    </location>
</feature>
<feature type="sequence variant" id="VAR_015202" description="In NPS." evidence="4">
    <original>C</original>
    <variation>S</variation>
    <location>
        <position position="59"/>
    </location>
</feature>
<feature type="sequence variant" id="VAR_047755" description="In dbSNP:rs2235058.">
    <original>S</original>
    <variation>F</variation>
    <location>
        <position position="75"/>
    </location>
</feature>
<feature type="sequence variant" id="VAR_015190" description="In NPS." evidence="5">
    <original>H</original>
    <variation>N</variation>
    <location>
        <position position="77"/>
    </location>
</feature>
<feature type="sequence variant" id="VAR_015203" description="In NPS." evidence="4">
    <original>H</original>
    <variation>Q</variation>
    <location>
        <position position="77"/>
    </location>
</feature>
<feature type="sequence variant" id="VAR_015204" description="In NPS." evidence="4">
    <original>H</original>
    <variation>Y</variation>
    <location>
        <position position="77"/>
    </location>
</feature>
<feature type="sequence variant" id="VAR_015205" description="In NPS; dbSNP:rs2118823527." evidence="4">
    <original>C</original>
    <variation>R</variation>
    <location>
        <position position="80"/>
    </location>
</feature>
<feature type="sequence variant" id="VAR_015191" description="In NPS; dbSNP:rs1835285672." evidence="5">
    <original>L</original>
    <variation>W</variation>
    <location>
        <position position="81"/>
    </location>
</feature>
<feature type="sequence variant" id="VAR_015192" description="In NPS." evidence="5">
    <original>C</original>
    <variation>F</variation>
    <location>
        <position position="83"/>
    </location>
</feature>
<feature type="sequence variant" id="VAR_015206" description="In NPS." evidence="4">
    <original>C</original>
    <variation>G</variation>
    <location>
        <position position="83"/>
    </location>
</feature>
<feature type="sequence variant" id="VAR_015193" description="In NPS." evidence="5">
    <original>C</original>
    <variation>W</variation>
    <location>
        <position position="83"/>
    </location>
</feature>
<feature type="sequence variant" id="VAR_015207" description="In NPS." evidence="4">
    <original>C</original>
    <variation>Y</variation>
    <location>
        <position position="83"/>
    </location>
</feature>
<feature type="sequence variant" id="VAR_015208" description="In NPS." evidence="4">
    <original>C</original>
    <variation>R</variation>
    <location>
        <position position="86"/>
    </location>
</feature>
<feature type="sequence variant" id="VAR_015194" description="In NPS." evidence="5">
    <original>C</original>
    <variation>W</variation>
    <location>
        <position position="103"/>
    </location>
</feature>
<feature type="sequence variant" id="VAR_015209" description="In NPS." evidence="4">
    <original>D</original>
    <variation>G</variation>
    <location>
        <position position="106"/>
    </location>
</feature>
<feature type="sequence variant" id="VAR_004198" description="In NPS; dbSNP:rs121909488." evidence="14">
    <original>C</original>
    <variation>F</variation>
    <location>
        <position position="118"/>
    </location>
</feature>
<feature type="sequence variant" id="VAR_015195" description="In NPS; dbSNP:rs121909488." evidence="4 5">
    <original>C</original>
    <variation>Y</variation>
    <location>
        <position position="118"/>
    </location>
</feature>
<feature type="sequence variant" id="VAR_015196" description="In NPS; dbSNP:rs2030102410." evidence="5">
    <original>H</original>
    <variation>Y</variation>
    <location>
        <position position="137"/>
    </location>
</feature>
<feature type="sequence variant" id="VAR_015197" description="In NPS; dbSNP:rs2118986952." evidence="5">
    <original>C</original>
    <variation>Y</variation>
    <location>
        <position position="140"/>
    </location>
</feature>
<feature type="sequence variant" id="VAR_015210" description="In NPS; dbSNP:rs2118986969." evidence="4">
    <original>C</original>
    <variation>S</variation>
    <location>
        <position position="143"/>
    </location>
</feature>
<feature type="sequence variant" id="VAR_015211" description="In NPS." evidence="4">
    <original>C</original>
    <variation>F</variation>
    <location>
        <position position="146"/>
    </location>
</feature>
<feature type="sequence variant" id="VAR_015212" description="In NPS." evidence="4">
    <original>C</original>
    <variation>Y</variation>
    <location>
        <position position="146"/>
    </location>
</feature>
<feature type="sequence variant" id="VAR_004199" description="In NPS." evidence="15">
    <original>C</original>
    <variation>W</variation>
    <location>
        <position position="165"/>
    </location>
</feature>
<feature type="sequence variant" id="VAR_004200" description="In NPS; dbSNP:rs121909491." evidence="5 15">
    <original>R</original>
    <variation>Q</variation>
    <location>
        <position position="223"/>
    </location>
</feature>
<feature type="sequence variant" id="VAR_004201" description="In NPS; dbSNP:rs1588307140." evidence="5 15">
    <original>A</original>
    <variation>P</variation>
    <location>
        <position position="236"/>
    </location>
</feature>
<feature type="sequence variant" id="VAR_004202" description="In NPS." evidence="15">
    <original>S</original>
    <variation>P</variation>
    <location>
        <position position="241"/>
    </location>
</feature>
<feature type="sequence variant" id="VAR_085231" description="In FSGS10; dbSNP:rs1191455921." evidence="7">
    <original>R</original>
    <variation>P</variation>
    <location>
        <position position="246"/>
    </location>
</feature>
<feature type="sequence variant" id="VAR_085232" description="In FSGS10; decreased transcriptional activity; dbSNP:rs1191455921." evidence="7 8 9 10 11 12">
    <original>R</original>
    <variation>Q</variation>
    <location>
        <position position="246"/>
    </location>
</feature>
<feature type="sequence variant" id="VAR_004203" description="In NPS; dbSNP:rs1056252582." evidence="15">
    <original>R</original>
    <variation>P</variation>
    <location>
        <position position="249"/>
    </location>
</feature>
<feature type="sequence variant" id="VAR_015213" description="In NPS." evidence="4">
    <original>L</original>
    <variation>P</variation>
    <location>
        <position position="252"/>
    </location>
</feature>
<feature type="sequence variant" id="VAR_004204" description="In NPS." evidence="15">
    <original>A</original>
    <variation>V</variation>
    <location>
        <position position="253"/>
    </location>
</feature>
<feature type="sequence variant" id="VAR_015198" description="In NPS." evidence="5">
    <original>W</original>
    <variation>C</variation>
    <location>
        <position position="266"/>
    </location>
</feature>
<feature type="sequence variant" id="VAR_004205" description="In NPS; dbSNP:rs121909486." evidence="5 13 15">
    <original>N</original>
    <variation>K</variation>
    <location>
        <position position="269"/>
    </location>
</feature>
<feature type="mutagenesis site" description="Loss of transcriptional activity." evidence="8">
    <original>V</original>
    <variation>L</variation>
    <location>
        <position position="265"/>
    </location>
</feature>
<protein>
    <recommendedName>
        <fullName>LIM homeobox transcription factor 1-beta</fullName>
    </recommendedName>
    <alternativeName>
        <fullName>LIM/homeobox protein 1.2</fullName>
        <shortName>LMX-1.2</shortName>
    </alternativeName>
    <alternativeName>
        <fullName>LIM/homeobox protein LMX1B</fullName>
    </alternativeName>
</protein>
<proteinExistence type="evidence at protein level"/>
<comment type="function">
    <text evidence="8 10">Transcription factor involved in the regulation of podocyte-expressed genes (PubMed:24042019, PubMed:28059119). Essential for the specification of dorsal limb fate at both the zeugopodal and autopodal levels.</text>
</comment>
<comment type="subunit">
    <text evidence="6">Interacts with DHX9 (PubMed:23308148).</text>
</comment>
<comment type="interaction">
    <interactant intactId="EBI-296386">
        <id>O60663</id>
    </interactant>
    <interactant intactId="EBI-677177">
        <id>Q86U70</id>
        <label>LDB1</label>
    </interactant>
    <organismsDiffer>false</organismsDiffer>
    <experiments>3</experiments>
</comment>
<comment type="interaction">
    <interactant intactId="EBI-296386">
        <id>O60663</id>
    </interactant>
    <interactant intactId="EBI-2902395">
        <id>Q9BWW4</id>
        <label>SSBP3</label>
    </interactant>
    <organismsDiffer>false</organismsDiffer>
    <experiments>4</experiments>
</comment>
<comment type="interaction">
    <interactant intactId="EBI-10258690">
        <id>O60663-2</id>
    </interactant>
    <interactant intactId="EBI-10192698">
        <id>Q02930-3</id>
        <label>CREB5</label>
    </interactant>
    <organismsDiffer>false</organismsDiffer>
    <experiments>3</experiments>
</comment>
<comment type="interaction">
    <interactant intactId="EBI-10258690">
        <id>O60663-2</id>
    </interactant>
    <interactant intactId="EBI-740785">
        <id>P49639</id>
        <label>HOXA1</label>
    </interactant>
    <organismsDiffer>false</organismsDiffer>
    <experiments>3</experiments>
</comment>
<comment type="interaction">
    <interactant intactId="EBI-10258690">
        <id>O60663-2</id>
    </interactant>
    <interactant intactId="EBI-677177">
        <id>Q86U70</id>
        <label>LDB1</label>
    </interactant>
    <organismsDiffer>false</organismsDiffer>
    <experiments>3</experiments>
</comment>
<comment type="interaction">
    <interactant intactId="EBI-10258690">
        <id>O60663-2</id>
    </interactant>
    <interactant intactId="EBI-11979761">
        <id>Q86U70-2</id>
        <label>LDB1</label>
    </interactant>
    <organismsDiffer>false</organismsDiffer>
    <experiments>4</experiments>
</comment>
<comment type="interaction">
    <interactant intactId="EBI-10258690">
        <id>O60663-2</id>
    </interactant>
    <interactant intactId="EBI-1805765">
        <id>Q02962</id>
        <label>PAX2</label>
    </interactant>
    <organismsDiffer>false</organismsDiffer>
    <experiments>3</experiments>
</comment>
<comment type="subcellular location">
    <subcellularLocation>
        <location evidence="1">Nucleus</location>
    </subcellularLocation>
</comment>
<comment type="alternative products">
    <event type="alternative splicing"/>
    <isoform>
        <id>O60663-1</id>
        <name>1</name>
        <name>Long</name>
        <sequence type="displayed"/>
    </isoform>
    <isoform>
        <id>O60663-2</id>
        <name>2</name>
        <name>Short</name>
        <sequence type="described" ref="VSP_003113"/>
    </isoform>
    <isoform>
        <id>O60663-3</id>
        <name>3</name>
        <sequence type="described" ref="VSP_046472 VSP_003113"/>
    </isoform>
</comment>
<comment type="tissue specificity">
    <text>Expressed in most tissues. Highest levels in testis, thyroid, duodenum, skeletal muscle, and pancreatic islets.</text>
</comment>
<comment type="disease" evidence="4 5 13 14 15">
    <disease id="DI-02026">
        <name>Nail-patella syndrome</name>
        <acronym>NPS</acronym>
        <description>Disease that cause abnormal skeletal patterning and renal dysplasia.</description>
        <dbReference type="MIM" id="161200"/>
    </disease>
    <text>The disease is caused by variants affecting the gene represented in this entry.</text>
</comment>
<comment type="disease" evidence="7 8 9 10 11 12">
    <disease id="DI-05975">
        <name>Focal segmental glomerulosclerosis 10</name>
        <acronym>FSGS10</acronym>
        <description>An autosomal dominant form of focal segmental glomerulosclerosis, a renal pathology defined by the presence of segmental sclerosis in glomeruli and resulting in proteinuria, reduced glomerular filtration rate and progressive decline in renal function. Renal insufficiency often progresses to end-stage renal disease, a highly morbid state requiring either dialysis therapy or kidney transplantation.</description>
        <dbReference type="MIM" id="256020"/>
    </disease>
    <text>The disease is caused by variants affecting the gene represented in this entry.</text>
</comment>
<comment type="sequence caution" evidence="18">
    <conflict type="erroneous initiation">
        <sequence resource="EMBL-CDS" id="AAC27294"/>
    </conflict>
    <text>Truncated N-terminus.</text>
</comment>
<comment type="sequence caution" evidence="18">
    <conflict type="erroneous initiation">
        <sequence resource="EMBL-CDS" id="AAC39738"/>
    </conflict>
    <text>Truncated N-terminus.</text>
</comment>
<comment type="sequence caution" evidence="18">
    <conflict type="erroneous initiation">
        <sequence resource="EMBL-CDS" id="AAH69601"/>
    </conflict>
    <text>Truncated N-terminus.</text>
</comment>
<comment type="sequence caution" evidence="18">
    <conflict type="erroneous initiation">
        <sequence resource="EMBL-CDS" id="AAI12121"/>
    </conflict>
    <text>Truncated N-terminus.</text>
</comment>
<comment type="sequence caution" evidence="18">
    <conflict type="erroneous initiation">
        <sequence resource="EMBL-CDS" id="AAI13492"/>
    </conflict>
    <text>Truncated N-terminus.</text>
</comment>
<comment type="sequence caution" evidence="18">
    <conflict type="erroneous initiation">
        <sequence resource="EMBL-CDS" id="EAW87642"/>
    </conflict>
    <text>Truncated N-terminus.</text>
</comment>
<accession>O60663</accession>
<accession>F8W7W6</accession>
<accession>O75463</accession>
<accession>Q5JU95</accession>
<accession>Q6ISC9</accession>
<reference key="1">
    <citation type="journal article" date="1998" name="Hum. Mol. Genet.">
        <title>Loss-of-function mutations in the LIM-homeodomain gene, LMX1B, in nail-patella syndrome.</title>
        <authorList>
            <person name="Vollrath D."/>
            <person name="Jaramillo-Babb V.L."/>
            <person name="Clough M.V."/>
            <person name="McIntosh I."/>
            <person name="Scott K.M."/>
            <person name="Lichter P.R."/>
            <person name="Richards J.E."/>
        </authorList>
    </citation>
    <scope>NUCLEOTIDE SEQUENCE [GENOMIC DNA] (ISOFORM 1)</scope>
    <scope>VARIANT NPS PHE-118</scope>
</reference>
<reference key="2">
    <citation type="journal article" date="2004" name="Nature">
        <title>DNA sequence and analysis of human chromosome 9.</title>
        <authorList>
            <person name="Humphray S.J."/>
            <person name="Oliver K."/>
            <person name="Hunt A.R."/>
            <person name="Plumb R.W."/>
            <person name="Loveland J.E."/>
            <person name="Howe K.L."/>
            <person name="Andrews T.D."/>
            <person name="Searle S."/>
            <person name="Hunt S.E."/>
            <person name="Scott C.E."/>
            <person name="Jones M.C."/>
            <person name="Ainscough R."/>
            <person name="Almeida J.P."/>
            <person name="Ambrose K.D."/>
            <person name="Ashwell R.I.S."/>
            <person name="Babbage A.K."/>
            <person name="Babbage S."/>
            <person name="Bagguley C.L."/>
            <person name="Bailey J."/>
            <person name="Banerjee R."/>
            <person name="Barker D.J."/>
            <person name="Barlow K.F."/>
            <person name="Bates K."/>
            <person name="Beasley H."/>
            <person name="Beasley O."/>
            <person name="Bird C.P."/>
            <person name="Bray-Allen S."/>
            <person name="Brown A.J."/>
            <person name="Brown J.Y."/>
            <person name="Burford D."/>
            <person name="Burrill W."/>
            <person name="Burton J."/>
            <person name="Carder C."/>
            <person name="Carter N.P."/>
            <person name="Chapman J.C."/>
            <person name="Chen Y."/>
            <person name="Clarke G."/>
            <person name="Clark S.Y."/>
            <person name="Clee C.M."/>
            <person name="Clegg S."/>
            <person name="Collier R.E."/>
            <person name="Corby N."/>
            <person name="Crosier M."/>
            <person name="Cummings A.T."/>
            <person name="Davies J."/>
            <person name="Dhami P."/>
            <person name="Dunn M."/>
            <person name="Dutta I."/>
            <person name="Dyer L.W."/>
            <person name="Earthrowl M.E."/>
            <person name="Faulkner L."/>
            <person name="Fleming C.J."/>
            <person name="Frankish A."/>
            <person name="Frankland J.A."/>
            <person name="French L."/>
            <person name="Fricker D.G."/>
            <person name="Garner P."/>
            <person name="Garnett J."/>
            <person name="Ghori J."/>
            <person name="Gilbert J.G.R."/>
            <person name="Glison C."/>
            <person name="Grafham D.V."/>
            <person name="Gribble S."/>
            <person name="Griffiths C."/>
            <person name="Griffiths-Jones S."/>
            <person name="Grocock R."/>
            <person name="Guy J."/>
            <person name="Hall R.E."/>
            <person name="Hammond S."/>
            <person name="Harley J.L."/>
            <person name="Harrison E.S.I."/>
            <person name="Hart E.A."/>
            <person name="Heath P.D."/>
            <person name="Henderson C.D."/>
            <person name="Hopkins B.L."/>
            <person name="Howard P.J."/>
            <person name="Howden P.J."/>
            <person name="Huckle E."/>
            <person name="Johnson C."/>
            <person name="Johnson D."/>
            <person name="Joy A.A."/>
            <person name="Kay M."/>
            <person name="Keenan S."/>
            <person name="Kershaw J.K."/>
            <person name="Kimberley A.M."/>
            <person name="King A."/>
            <person name="Knights A."/>
            <person name="Laird G.K."/>
            <person name="Langford C."/>
            <person name="Lawlor S."/>
            <person name="Leongamornlert D.A."/>
            <person name="Leversha M."/>
            <person name="Lloyd C."/>
            <person name="Lloyd D.M."/>
            <person name="Lovell J."/>
            <person name="Martin S."/>
            <person name="Mashreghi-Mohammadi M."/>
            <person name="Matthews L."/>
            <person name="McLaren S."/>
            <person name="McLay K.E."/>
            <person name="McMurray A."/>
            <person name="Milne S."/>
            <person name="Nickerson T."/>
            <person name="Nisbett J."/>
            <person name="Nordsiek G."/>
            <person name="Pearce A.V."/>
            <person name="Peck A.I."/>
            <person name="Porter K.M."/>
            <person name="Pandian R."/>
            <person name="Pelan S."/>
            <person name="Phillimore B."/>
            <person name="Povey S."/>
            <person name="Ramsey Y."/>
            <person name="Rand V."/>
            <person name="Scharfe M."/>
            <person name="Sehra H.K."/>
            <person name="Shownkeen R."/>
            <person name="Sims S.K."/>
            <person name="Skuce C.D."/>
            <person name="Smith M."/>
            <person name="Steward C.A."/>
            <person name="Swarbreck D."/>
            <person name="Sycamore N."/>
            <person name="Tester J."/>
            <person name="Thorpe A."/>
            <person name="Tracey A."/>
            <person name="Tromans A."/>
            <person name="Thomas D.W."/>
            <person name="Wall M."/>
            <person name="Wallis J.M."/>
            <person name="West A.P."/>
            <person name="Whitehead S.L."/>
            <person name="Willey D.L."/>
            <person name="Williams S.A."/>
            <person name="Wilming L."/>
            <person name="Wray P.W."/>
            <person name="Young L."/>
            <person name="Ashurst J.L."/>
            <person name="Coulson A."/>
            <person name="Blocker H."/>
            <person name="Durbin R.M."/>
            <person name="Sulston J.E."/>
            <person name="Hubbard T."/>
            <person name="Jackson M.J."/>
            <person name="Bentley D.R."/>
            <person name="Beck S."/>
            <person name="Rogers J."/>
            <person name="Dunham I."/>
        </authorList>
    </citation>
    <scope>NUCLEOTIDE SEQUENCE [LARGE SCALE GENOMIC DNA]</scope>
</reference>
<reference key="3">
    <citation type="submission" date="2005-07" db="EMBL/GenBank/DDBJ databases">
        <authorList>
            <person name="Mural R.J."/>
            <person name="Istrail S."/>
            <person name="Sutton G.G."/>
            <person name="Florea L."/>
            <person name="Halpern A.L."/>
            <person name="Mobarry C.M."/>
            <person name="Lippert R."/>
            <person name="Walenz B."/>
            <person name="Shatkay H."/>
            <person name="Dew I."/>
            <person name="Miller J.R."/>
            <person name="Flanigan M.J."/>
            <person name="Edwards N.J."/>
            <person name="Bolanos R."/>
            <person name="Fasulo D."/>
            <person name="Halldorsson B.V."/>
            <person name="Hannenhalli S."/>
            <person name="Turner R."/>
            <person name="Yooseph S."/>
            <person name="Lu F."/>
            <person name="Nusskern D.R."/>
            <person name="Shue B.C."/>
            <person name="Zheng X.H."/>
            <person name="Zhong F."/>
            <person name="Delcher A.L."/>
            <person name="Huson D.H."/>
            <person name="Kravitz S.A."/>
            <person name="Mouchard L."/>
            <person name="Reinert K."/>
            <person name="Remington K.A."/>
            <person name="Clark A.G."/>
            <person name="Waterman M.S."/>
            <person name="Eichler E.E."/>
            <person name="Adams M.D."/>
            <person name="Hunkapiller M.W."/>
            <person name="Myers E.W."/>
            <person name="Venter J.C."/>
        </authorList>
    </citation>
    <scope>NUCLEOTIDE SEQUENCE [LARGE SCALE GENOMIC DNA]</scope>
</reference>
<reference key="4">
    <citation type="journal article" date="2004" name="Genome Res.">
        <title>The status, quality, and expansion of the NIH full-length cDNA project: the Mammalian Gene Collection (MGC).</title>
        <authorList>
            <consortium name="The MGC Project Team"/>
        </authorList>
    </citation>
    <scope>NUCLEOTIDE SEQUENCE [LARGE SCALE MRNA] OF 8-402 (ISOFORM 2)</scope>
</reference>
<reference key="5">
    <citation type="journal article" date="1998" name="Nat. Genet.">
        <title>Mutations in LMX1B cause abnormal skeletal patterning and renal dysplasia in nail patella syndrome.</title>
        <authorList>
            <person name="Dreyer S.D."/>
            <person name="Zhou G."/>
            <person name="Baldini A."/>
            <person name="Winterpacht A."/>
            <person name="Zabel B."/>
            <person name="Cole W."/>
            <person name="Johnson R.L."/>
            <person name="Lee B."/>
        </authorList>
    </citation>
    <scope>NUCLEOTIDE SEQUENCE [MRNA] OF 24-402 (ISOFORM 2)</scope>
    <scope>VARIANT NPS LYS-269</scope>
</reference>
<reference key="6">
    <citation type="journal article" date="2013" name="PLoS ONE">
        <title>LMX1B is part of a transcriptional complex with PSPC1 and PSF.</title>
        <authorList>
            <person name="Hoekstra E.J."/>
            <person name="Mesman S."/>
            <person name="de Munnik W.A."/>
            <person name="Smidt M.P."/>
        </authorList>
    </citation>
    <scope>INTERACTION WITH DHX9</scope>
</reference>
<reference key="7">
    <citation type="journal article" date="1998" name="Am. J. Hum. Genet.">
        <title>Mutation analysis of LMX1B gene in nail-patella syndrome patients.</title>
        <authorList>
            <person name="McIntosh I."/>
            <person name="Dreyer S.D."/>
            <person name="Clough M.V."/>
            <person name="Dunston J.A."/>
            <person name="Eyaid W."/>
            <person name="Roig C.M."/>
            <person name="Montgomery T."/>
            <person name="Ala-Mello S."/>
            <person name="Kaitila I."/>
            <person name="Winterpacht A."/>
            <person name="Zabel B."/>
            <person name="Frydman M."/>
            <person name="Cole W.G."/>
            <person name="Francomano C.A."/>
            <person name="Lee B."/>
        </authorList>
    </citation>
    <scope>VARIANTS NPS TRP-165; GLN-223; PRO-236; PRO-241; PRO-249; VAL-253 AND LYS-269</scope>
</reference>
<reference key="8">
    <citation type="journal article" date="1999" name="Hum. Mutat.">
        <title>Restricted distribution of loss-of-function mutations within the LMX1B genes of nail-patella syndrome patients.</title>
        <authorList>
            <person name="Clough M.V."/>
            <person name="Hamlington J.D."/>
            <person name="McIntosh I."/>
        </authorList>
    </citation>
    <scope>VARIANTS NPS ARG-59; SER-59; GLN-77; TYR-77; ARG-80; GLY-83; TYR-83; ARG-86; GLY-106; TYR-118; SER-143; PHE-146; TYR-146 AND PRO-252</scope>
</reference>
<reference key="9">
    <citation type="journal article" date="2001" name="Hum. Mutat.">
        <title>Twenty-two novel LMX1B mutations identified in nail patella syndrome (NPS) patients.</title>
        <authorList>
            <person name="Hamlington J.D."/>
            <person name="Jones C."/>
            <person name="McIntosh I."/>
        </authorList>
    </citation>
    <scope>VARIANTS NPS ASN-77; TRP-81; PHE-83; TRP-83; TRP-103; TYR-118; TYR-137; TYR-140; GLN-223; PRO-236; CYS-266 AND LYS-269</scope>
</reference>
<reference key="10">
    <citation type="journal article" date="2013" name="J. Am. Soc. Nephrol.">
        <title>LMX1B mutations cause hereditary FSGS without extrarenal involvement.</title>
        <authorList>
            <person name="Boyer O."/>
            <person name="Woerner S."/>
            <person name="Yang F."/>
            <person name="Oakeley E.J."/>
            <person name="Linghu B."/>
            <person name="Gribouval O."/>
            <person name="Tete M.J."/>
            <person name="Duca J.S."/>
            <person name="Klickstein L."/>
            <person name="Damask A.J."/>
            <person name="Szustakowski J.D."/>
            <person name="Heibel F."/>
            <person name="Matignon M."/>
            <person name="Baudouin V."/>
            <person name="Chantrel F."/>
            <person name="Champigneulle J."/>
            <person name="Martin L."/>
            <person name="Nitschke P."/>
            <person name="Gubler M.C."/>
            <person name="Johnson K.J."/>
            <person name="Chibout S.D."/>
            <person name="Antignac C."/>
        </authorList>
    </citation>
    <scope>VARIANTS FSGS10 GLN-246 AND PRO-246</scope>
    <scope>INVOLVEMENT IN FSGS10</scope>
</reference>
<reference key="11">
    <citation type="journal article" date="2014" name="Nephrol. Dial. Transplant.">
        <title>LMX1B mutation with residual transcriptional activity as a cause of isolated glomerulopathy.</title>
        <authorList>
            <person name="Isojima T."/>
            <person name="Harita Y."/>
            <person name="Furuyama M."/>
            <person name="Sugawara N."/>
            <person name="Ishizuka K."/>
            <person name="Horita S."/>
            <person name="Kajiho Y."/>
            <person name="Miura K."/>
            <person name="Igarashi T."/>
            <person name="Hattori M."/>
            <person name="Kitanaka S."/>
        </authorList>
    </citation>
    <scope>VARIANT FSGS10 GLN-246</scope>
    <scope>CHARACTERIZATION OF VARIANT FSGS10 GLN-246</scope>
    <scope>INVOLVEMENT IN FSGS10</scope>
    <scope>FUNCTION</scope>
    <scope>MUTAGENESIS OF VAL-265</scope>
</reference>
<reference key="12">
    <citation type="journal article" date="2016" name="Nephrology">
        <title>Clinical and histological findings of autosomal dominant renal-limited disease with LMX1B mutation.</title>
        <authorList>
            <person name="Konomoto T."/>
            <person name="Imamura H."/>
            <person name="Orita M."/>
            <person name="Tanaka E."/>
            <person name="Moritake H."/>
            <person name="Sato Y."/>
            <person name="Fujimoto S."/>
            <person name="Harita Y."/>
            <person name="Hisano S."/>
            <person name="Yoshiura K."/>
            <person name="Nunoi H."/>
        </authorList>
    </citation>
    <scope>VARIANT FSGS10 GLN-246</scope>
    <scope>INVOLVEMENT IN FSGS10</scope>
</reference>
<reference key="13">
    <citation type="journal article" date="2017" name="Sci. Rep.">
        <title>Dysregulation of WTI (-KTS) is associated with the kidney-specific effects of the LMX1B R246Q mutation.</title>
        <authorList>
            <person name="Hall G."/>
            <person name="Lane B."/>
            <person name="Chryst-Ladd M."/>
            <person name="Wu G."/>
            <person name="Lin J.J."/>
            <person name="Qin X."/>
            <person name="Hauser E.R."/>
            <person name="Gbadegesin R."/>
        </authorList>
    </citation>
    <scope>VARIANT FSGS10 GLN-246</scope>
    <scope>INVOLVEMENT IN FSGS10</scope>
    <scope>FUNCTION</scope>
</reference>
<reference key="14">
    <citation type="journal article" date="2020" name="BMC Nephrol.">
        <title>Nail-patella-like renal disease masquerading as Fabry disease on kidney biopsy: a case report.</title>
        <authorList>
            <person name="Pinto E Vairo F."/>
            <person name="Pichurin P.N."/>
            <person name="Fervenza F.C."/>
            <person name="Nasr S.H."/>
            <person name="Mills K."/>
            <person name="Schmitz C.T."/>
            <person name="Klee E.W."/>
            <person name="Herrmann S.M."/>
        </authorList>
    </citation>
    <scope>VARIANT FSGS10 GLN-246</scope>
</reference>
<reference key="15">
    <citation type="journal article" date="2020" name="Pediatr. Nephrol.">
        <title>Myelin bodies in LMX1B-associated nephropathy: potential for misdiagnosis.</title>
        <authorList>
            <person name="Lei L."/>
            <person name="Oh G."/>
            <person name="Sutherland S."/>
            <person name="Abra G."/>
            <person name="Higgins J."/>
            <person name="Sibley R."/>
            <person name="Troxell M."/>
            <person name="Kambham N."/>
        </authorList>
    </citation>
    <scope>VARIANT FSGS10 GLN-246</scope>
</reference>
<gene>
    <name type="primary">LMX1B</name>
</gene>
<dbReference type="EMBL" id="AF059575">
    <property type="protein sequence ID" value="AAC27294.1"/>
    <property type="status" value="ALT_INIT"/>
    <property type="molecule type" value="Genomic_DNA"/>
</dbReference>
<dbReference type="EMBL" id="AF059572">
    <property type="protein sequence ID" value="AAC27294.1"/>
    <property type="status" value="JOINED"/>
    <property type="molecule type" value="Genomic_DNA"/>
</dbReference>
<dbReference type="EMBL" id="AF059573">
    <property type="protein sequence ID" value="AAC27294.1"/>
    <property type="status" value="JOINED"/>
    <property type="molecule type" value="Genomic_DNA"/>
</dbReference>
<dbReference type="EMBL" id="AF059574">
    <property type="protein sequence ID" value="AAC27294.1"/>
    <property type="status" value="JOINED"/>
    <property type="molecule type" value="Genomic_DNA"/>
</dbReference>
<dbReference type="EMBL" id="AL161731">
    <property type="status" value="NOT_ANNOTATED_CDS"/>
    <property type="molecule type" value="Genomic_DNA"/>
</dbReference>
<dbReference type="EMBL" id="AL161908">
    <property type="status" value="NOT_ANNOTATED_CDS"/>
    <property type="molecule type" value="Genomic_DNA"/>
</dbReference>
<dbReference type="EMBL" id="CH471090">
    <property type="protein sequence ID" value="EAW87642.1"/>
    <property type="status" value="ALT_INIT"/>
    <property type="molecule type" value="Genomic_DNA"/>
</dbReference>
<dbReference type="EMBL" id="BC069601">
    <property type="protein sequence ID" value="AAH69601.1"/>
    <property type="status" value="ALT_INIT"/>
    <property type="molecule type" value="mRNA"/>
</dbReference>
<dbReference type="EMBL" id="BC112120">
    <property type="protein sequence ID" value="AAI12121.1"/>
    <property type="status" value="ALT_INIT"/>
    <property type="molecule type" value="mRNA"/>
</dbReference>
<dbReference type="EMBL" id="BC113491">
    <property type="protein sequence ID" value="AAI13492.1"/>
    <property type="status" value="ALT_INIT"/>
    <property type="molecule type" value="mRNA"/>
</dbReference>
<dbReference type="EMBL" id="AF057135">
    <property type="protein sequence ID" value="AAC39738.1"/>
    <property type="status" value="ALT_INIT"/>
    <property type="molecule type" value="mRNA"/>
</dbReference>
<dbReference type="CCDS" id="CCDS55342.1">
    <molecule id="O60663-1"/>
</dbReference>
<dbReference type="CCDS" id="CCDS55343.1">
    <molecule id="O60663-3"/>
</dbReference>
<dbReference type="CCDS" id="CCDS6866.2">
    <molecule id="O60663-2"/>
</dbReference>
<dbReference type="RefSeq" id="NP_001167617.1">
    <molecule id="O60663-3"/>
    <property type="nucleotide sequence ID" value="NM_001174146.2"/>
</dbReference>
<dbReference type="RefSeq" id="NP_001167618.1">
    <molecule id="O60663-1"/>
    <property type="nucleotide sequence ID" value="NM_001174147.2"/>
</dbReference>
<dbReference type="RefSeq" id="NP_002307.2">
    <molecule id="O60663-2"/>
    <property type="nucleotide sequence ID" value="NM_002316.4"/>
</dbReference>
<dbReference type="SMR" id="O60663"/>
<dbReference type="BioGRID" id="110195">
    <property type="interactions" value="103"/>
</dbReference>
<dbReference type="FunCoup" id="O60663">
    <property type="interactions" value="909"/>
</dbReference>
<dbReference type="IntAct" id="O60663">
    <property type="interactions" value="27"/>
</dbReference>
<dbReference type="MINT" id="O60663"/>
<dbReference type="STRING" id="9606.ENSP00000347684"/>
<dbReference type="iPTMnet" id="O60663"/>
<dbReference type="PhosphoSitePlus" id="O60663"/>
<dbReference type="BioMuta" id="LMX1B"/>
<dbReference type="MassIVE" id="O60663"/>
<dbReference type="PaxDb" id="9606-ENSP00000347684"/>
<dbReference type="PeptideAtlas" id="O60663"/>
<dbReference type="ProteomicsDB" id="30025"/>
<dbReference type="ProteomicsDB" id="49506">
    <molecule id="O60663-1"/>
</dbReference>
<dbReference type="ProteomicsDB" id="49507">
    <molecule id="O60663-2"/>
</dbReference>
<dbReference type="Pumba" id="O60663"/>
<dbReference type="Antibodypedia" id="30610">
    <property type="antibodies" value="278 antibodies from 36 providers"/>
</dbReference>
<dbReference type="DNASU" id="4010"/>
<dbReference type="Ensembl" id="ENST00000355497.10">
    <molecule id="O60663-3"/>
    <property type="protein sequence ID" value="ENSP00000347684.5"/>
    <property type="gene ID" value="ENSG00000136944.19"/>
</dbReference>
<dbReference type="Ensembl" id="ENST00000373474.9">
    <molecule id="O60663-1"/>
    <property type="protein sequence ID" value="ENSP00000362573.3"/>
    <property type="gene ID" value="ENSG00000136944.19"/>
</dbReference>
<dbReference type="Ensembl" id="ENST00000526117.6">
    <molecule id="O60663-2"/>
    <property type="protein sequence ID" value="ENSP00000436930.1"/>
    <property type="gene ID" value="ENSG00000136944.19"/>
</dbReference>
<dbReference type="GeneID" id="4010"/>
<dbReference type="KEGG" id="hsa:4010"/>
<dbReference type="MANE-Select" id="ENST00000373474.9">
    <property type="protein sequence ID" value="ENSP00000362573.3"/>
    <property type="RefSeq nucleotide sequence ID" value="NM_001174147.2"/>
    <property type="RefSeq protein sequence ID" value="NP_001167618.1"/>
</dbReference>
<dbReference type="UCSC" id="uc004bqi.4">
    <molecule id="O60663-1"/>
    <property type="organism name" value="human"/>
</dbReference>
<dbReference type="AGR" id="HGNC:6654"/>
<dbReference type="CTD" id="4010"/>
<dbReference type="DisGeNET" id="4010"/>
<dbReference type="GeneCards" id="LMX1B"/>
<dbReference type="GeneReviews" id="LMX1B"/>
<dbReference type="HGNC" id="HGNC:6654">
    <property type="gene designation" value="LMX1B"/>
</dbReference>
<dbReference type="HPA" id="ENSG00000136944">
    <property type="expression patterns" value="Tissue enriched (salivary)"/>
</dbReference>
<dbReference type="MalaCards" id="LMX1B"/>
<dbReference type="MIM" id="161200">
    <property type="type" value="phenotype"/>
</dbReference>
<dbReference type="MIM" id="256020">
    <property type="type" value="phenotype"/>
</dbReference>
<dbReference type="MIM" id="602575">
    <property type="type" value="gene"/>
</dbReference>
<dbReference type="neXtProt" id="NX_O60663"/>
<dbReference type="OpenTargets" id="ENSG00000136944"/>
<dbReference type="Orphanet" id="495818">
    <property type="disease" value="9q33.3q34.11 microdeletion syndrome"/>
</dbReference>
<dbReference type="Orphanet" id="2614">
    <property type="disease" value="Nail-patella syndrome"/>
</dbReference>
<dbReference type="Orphanet" id="2613">
    <property type="disease" value="Nail-patella-like renal disease"/>
</dbReference>
<dbReference type="PharmGKB" id="PA30417"/>
<dbReference type="VEuPathDB" id="HostDB:ENSG00000136944"/>
<dbReference type="eggNOG" id="KOG0490">
    <property type="taxonomic scope" value="Eukaryota"/>
</dbReference>
<dbReference type="GeneTree" id="ENSGT00940000157955"/>
<dbReference type="InParanoid" id="O60663"/>
<dbReference type="OMA" id="TTTCYFR"/>
<dbReference type="OrthoDB" id="6159439at2759"/>
<dbReference type="PAN-GO" id="O60663">
    <property type="GO annotations" value="5 GO annotations based on evolutionary models"/>
</dbReference>
<dbReference type="TreeFam" id="TF315442"/>
<dbReference type="PathwayCommons" id="O60663"/>
<dbReference type="SignaLink" id="O60663"/>
<dbReference type="SIGNOR" id="O60663"/>
<dbReference type="BioGRID-ORCS" id="4010">
    <property type="hits" value="15 hits in 1173 CRISPR screens"/>
</dbReference>
<dbReference type="ChiTaRS" id="LMX1B">
    <property type="organism name" value="human"/>
</dbReference>
<dbReference type="GeneWiki" id="LMX1B"/>
<dbReference type="GenomeRNAi" id="4010"/>
<dbReference type="Pharos" id="O60663">
    <property type="development level" value="Tbio"/>
</dbReference>
<dbReference type="PRO" id="PR:O60663"/>
<dbReference type="Proteomes" id="UP000005640">
    <property type="component" value="Chromosome 9"/>
</dbReference>
<dbReference type="RNAct" id="O60663">
    <property type="molecule type" value="protein"/>
</dbReference>
<dbReference type="Bgee" id="ENSG00000136944">
    <property type="expression patterns" value="Expressed in sural nerve and 50 other cell types or tissues"/>
</dbReference>
<dbReference type="GO" id="GO:0000785">
    <property type="term" value="C:chromatin"/>
    <property type="evidence" value="ECO:0000247"/>
    <property type="project" value="NTNU_SB"/>
</dbReference>
<dbReference type="GO" id="GO:0005634">
    <property type="term" value="C:nucleus"/>
    <property type="evidence" value="ECO:0000314"/>
    <property type="project" value="UniProtKB"/>
</dbReference>
<dbReference type="GO" id="GO:0003700">
    <property type="term" value="F:DNA-binding transcription factor activity"/>
    <property type="evidence" value="ECO:0000314"/>
    <property type="project" value="UniProtKB"/>
</dbReference>
<dbReference type="GO" id="GO:0000981">
    <property type="term" value="F:DNA-binding transcription factor activity, RNA polymerase II-specific"/>
    <property type="evidence" value="ECO:0000250"/>
    <property type="project" value="ParkinsonsUK-UCL"/>
</dbReference>
<dbReference type="GO" id="GO:0046872">
    <property type="term" value="F:metal ion binding"/>
    <property type="evidence" value="ECO:0007669"/>
    <property type="project" value="UniProtKB-KW"/>
</dbReference>
<dbReference type="GO" id="GO:0000977">
    <property type="term" value="F:RNA polymerase II transcription regulatory region sequence-specific DNA binding"/>
    <property type="evidence" value="ECO:0000250"/>
    <property type="project" value="ParkinsonsUK-UCL"/>
</dbReference>
<dbReference type="GO" id="GO:1990837">
    <property type="term" value="F:sequence-specific double-stranded DNA binding"/>
    <property type="evidence" value="ECO:0000314"/>
    <property type="project" value="ARUK-UCL"/>
</dbReference>
<dbReference type="GO" id="GO:0071542">
    <property type="term" value="P:dopaminergic neuron differentiation"/>
    <property type="evidence" value="ECO:0000250"/>
    <property type="project" value="ParkinsonsUK-UCL"/>
</dbReference>
<dbReference type="GO" id="GO:0009953">
    <property type="term" value="P:dorsal/ventral pattern formation"/>
    <property type="evidence" value="ECO:0000250"/>
    <property type="project" value="UniProtKB"/>
</dbReference>
<dbReference type="GO" id="GO:0030182">
    <property type="term" value="P:neuron differentiation"/>
    <property type="evidence" value="ECO:0000250"/>
    <property type="project" value="UniProtKB"/>
</dbReference>
<dbReference type="GO" id="GO:0045944">
    <property type="term" value="P:positive regulation of transcription by RNA polymerase II"/>
    <property type="evidence" value="ECO:0000250"/>
    <property type="project" value="ParkinsonsUK-UCL"/>
</dbReference>
<dbReference type="GO" id="GO:0006355">
    <property type="term" value="P:regulation of DNA-templated transcription"/>
    <property type="evidence" value="ECO:0000314"/>
    <property type="project" value="UniProtKB"/>
</dbReference>
<dbReference type="GO" id="GO:0006357">
    <property type="term" value="P:regulation of transcription by RNA polymerase II"/>
    <property type="evidence" value="ECO:0000318"/>
    <property type="project" value="GO_Central"/>
</dbReference>
<dbReference type="CDD" id="cd00086">
    <property type="entry name" value="homeodomain"/>
    <property type="match status" value="1"/>
</dbReference>
<dbReference type="CDD" id="cd09371">
    <property type="entry name" value="LIM1_Lmx1b"/>
    <property type="match status" value="1"/>
</dbReference>
<dbReference type="CDD" id="cd09378">
    <property type="entry name" value="LIM2_Lmx1a_Lmx1b"/>
    <property type="match status" value="1"/>
</dbReference>
<dbReference type="FunFam" id="1.10.10.60:FF:000095">
    <property type="entry name" value="LIM homeobox transcription factor 1 beta"/>
    <property type="match status" value="1"/>
</dbReference>
<dbReference type="FunFam" id="2.10.110.10:FF:000006">
    <property type="entry name" value="LIM homeobox transcription factor 1-beta"/>
    <property type="match status" value="1"/>
</dbReference>
<dbReference type="FunFam" id="2.10.110.10:FF:000257">
    <property type="entry name" value="Transcription factor Lmx1b"/>
    <property type="match status" value="1"/>
</dbReference>
<dbReference type="Gene3D" id="2.10.110.10">
    <property type="entry name" value="Cysteine Rich Protein"/>
    <property type="match status" value="2"/>
</dbReference>
<dbReference type="Gene3D" id="1.10.10.60">
    <property type="entry name" value="Homeodomain-like"/>
    <property type="match status" value="1"/>
</dbReference>
<dbReference type="InterPro" id="IPR001356">
    <property type="entry name" value="HD"/>
</dbReference>
<dbReference type="InterPro" id="IPR017970">
    <property type="entry name" value="Homeobox_CS"/>
</dbReference>
<dbReference type="InterPro" id="IPR009057">
    <property type="entry name" value="Homeodomain-like_sf"/>
</dbReference>
<dbReference type="InterPro" id="IPR050453">
    <property type="entry name" value="LIM_Homeobox_TF"/>
</dbReference>
<dbReference type="InterPro" id="IPR001781">
    <property type="entry name" value="Znf_LIM"/>
</dbReference>
<dbReference type="PANTHER" id="PTHR24208:SF96">
    <property type="entry name" value="LIM HOMEOBOX TRANSCRIPTION FACTOR 1-BETA"/>
    <property type="match status" value="1"/>
</dbReference>
<dbReference type="PANTHER" id="PTHR24208">
    <property type="entry name" value="LIM/HOMEOBOX PROTEIN LHX"/>
    <property type="match status" value="1"/>
</dbReference>
<dbReference type="Pfam" id="PF00046">
    <property type="entry name" value="Homeodomain"/>
    <property type="match status" value="1"/>
</dbReference>
<dbReference type="Pfam" id="PF00412">
    <property type="entry name" value="LIM"/>
    <property type="match status" value="2"/>
</dbReference>
<dbReference type="SMART" id="SM00389">
    <property type="entry name" value="HOX"/>
    <property type="match status" value="1"/>
</dbReference>
<dbReference type="SMART" id="SM00132">
    <property type="entry name" value="LIM"/>
    <property type="match status" value="2"/>
</dbReference>
<dbReference type="SUPFAM" id="SSF57716">
    <property type="entry name" value="Glucocorticoid receptor-like (DNA-binding domain)"/>
    <property type="match status" value="2"/>
</dbReference>
<dbReference type="SUPFAM" id="SSF46689">
    <property type="entry name" value="Homeodomain-like"/>
    <property type="match status" value="1"/>
</dbReference>
<dbReference type="PROSITE" id="PS00027">
    <property type="entry name" value="HOMEOBOX_1"/>
    <property type="match status" value="1"/>
</dbReference>
<dbReference type="PROSITE" id="PS50071">
    <property type="entry name" value="HOMEOBOX_2"/>
    <property type="match status" value="1"/>
</dbReference>
<dbReference type="PROSITE" id="PS00478">
    <property type="entry name" value="LIM_DOMAIN_1"/>
    <property type="match status" value="2"/>
</dbReference>
<dbReference type="PROSITE" id="PS50023">
    <property type="entry name" value="LIM_DOMAIN_2"/>
    <property type="match status" value="2"/>
</dbReference>
<name>LMX1B_HUMAN</name>